<comment type="function">
    <text>Probably participates in a plant defense mechanism.</text>
</comment>
<comment type="domain">
    <text>The presence of a 'disulfide through disulfide knot' structurally defines this protein as a knottin.</text>
</comment>
<comment type="PTM">
    <text>This is a cyclic peptide.</text>
</comment>
<comment type="similarity">
    <text evidence="1">Belongs to the cyclotide family. Bracelet subfamily.</text>
</comment>
<comment type="caution">
    <text evidence="2">This peptide is cyclic. The start position was chosen by similarity to OAK1 (kalata-B1) for which the DNA sequence is known.</text>
</comment>
<evidence type="ECO:0000255" key="1">
    <source>
        <dbReference type="PROSITE-ProRule" id="PRU00395"/>
    </source>
</evidence>
<evidence type="ECO:0000305" key="2"/>
<accession>P58433</accession>
<sequence>GIPCGESCVYIPCLTSAIGCSCKSKVCYRN</sequence>
<keyword id="KW-0903">Direct protein sequencing</keyword>
<keyword id="KW-1015">Disulfide bond</keyword>
<keyword id="KW-0960">Knottin</keyword>
<keyword id="KW-0611">Plant defense</keyword>
<proteinExistence type="evidence at protein level"/>
<protein>
    <recommendedName>
        <fullName>Cycloviolacin-H1</fullName>
    </recommendedName>
</protein>
<reference key="1">
    <citation type="journal article" date="1999" name="J. Mol. Biol.">
        <title>Plant cyclotides: a unique family of cyclic and knotted proteins that defines the cyclic cystine knot structural motif.</title>
        <authorList>
            <person name="Craik D.J."/>
            <person name="Daly N.L."/>
            <person name="Bond T."/>
            <person name="Waine C."/>
        </authorList>
    </citation>
    <scope>PROTEIN SEQUENCE</scope>
</reference>
<name>CYH1_VIOHE</name>
<organism>
    <name type="scientific">Viola hederacea</name>
    <name type="common">Australian violet</name>
    <dbReference type="NCBI Taxonomy" id="180952"/>
    <lineage>
        <taxon>Eukaryota</taxon>
        <taxon>Viridiplantae</taxon>
        <taxon>Streptophyta</taxon>
        <taxon>Embryophyta</taxon>
        <taxon>Tracheophyta</taxon>
        <taxon>Spermatophyta</taxon>
        <taxon>Magnoliopsida</taxon>
        <taxon>eudicotyledons</taxon>
        <taxon>Gunneridae</taxon>
        <taxon>Pentapetalae</taxon>
        <taxon>rosids</taxon>
        <taxon>fabids</taxon>
        <taxon>Malpighiales</taxon>
        <taxon>Violaceae</taxon>
        <taxon>Viola</taxon>
        <taxon>Viola subgen. Viola</taxon>
        <taxon>Viola sect. Erpetion</taxon>
    </lineage>
</organism>
<feature type="peptide" id="PRO_0000043607" description="Cycloviolacin-H1">
    <location>
        <begin position="1"/>
        <end position="30"/>
    </location>
</feature>
<feature type="disulfide bond">
    <location>
        <begin position="4"/>
        <end position="20"/>
    </location>
</feature>
<feature type="disulfide bond">
    <location>
        <begin position="8"/>
        <end position="22"/>
    </location>
</feature>
<feature type="disulfide bond">
    <location>
        <begin position="13"/>
        <end position="27"/>
    </location>
</feature>
<feature type="cross-link" description="Cyclopeptide (Gly-Asn)">
    <location>
        <begin position="1"/>
        <end position="30"/>
    </location>
</feature>
<dbReference type="SMR" id="P58433"/>
<dbReference type="GO" id="GO:0006952">
    <property type="term" value="P:defense response"/>
    <property type="evidence" value="ECO:0007669"/>
    <property type="project" value="UniProtKB-KW"/>
</dbReference>
<dbReference type="InterPro" id="IPR005535">
    <property type="entry name" value="Cyclotide"/>
</dbReference>
<dbReference type="InterPro" id="IPR012323">
    <property type="entry name" value="Cyclotide_bracelet_CS"/>
</dbReference>
<dbReference type="InterPro" id="IPR036146">
    <property type="entry name" value="Cyclotide_sf"/>
</dbReference>
<dbReference type="Pfam" id="PF03784">
    <property type="entry name" value="Cyclotide"/>
    <property type="match status" value="1"/>
</dbReference>
<dbReference type="PIRSF" id="PIRSF037891">
    <property type="entry name" value="Cycloviolacin"/>
    <property type="match status" value="1"/>
</dbReference>
<dbReference type="SUPFAM" id="SSF57038">
    <property type="entry name" value="Cyclotides"/>
    <property type="match status" value="1"/>
</dbReference>
<dbReference type="PROSITE" id="PS51052">
    <property type="entry name" value="CYCLOTIDE"/>
    <property type="match status" value="1"/>
</dbReference>
<dbReference type="PROSITE" id="PS60008">
    <property type="entry name" value="CYCLOTIDE_BRACELET"/>
    <property type="match status" value="1"/>
</dbReference>